<proteinExistence type="evidence at protein level"/>
<comment type="similarity">
    <text evidence="1">To Synechocystis PCC 6803 slr1025.</text>
</comment>
<sequence>MYNYKEVKHMGYGKGYLAMFKNKKVRFKVVNSFPDLKVQFVTSFPDYKVKISNSSSFCEETIKIQVVTSFPDVKLQKVTSFGDFEAYID</sequence>
<name>Y08A_UREPA</name>
<reference key="1">
    <citation type="journal article" date="2000" name="Nature">
        <title>The complete sequence of the mucosal pathogen Ureaplasma urealyticum.</title>
        <authorList>
            <person name="Glass J.I."/>
            <person name="Lefkowitz E.J."/>
            <person name="Glass J.S."/>
            <person name="Heiner C.R."/>
            <person name="Chen E.Y."/>
            <person name="Cassell G.H."/>
        </authorList>
    </citation>
    <scope>NUCLEOTIDE SEQUENCE [LARGE SCALE GENOMIC DNA]</scope>
    <source>
        <strain>ATCC 700970</strain>
    </source>
</reference>
<keyword id="KW-0002">3D-structure</keyword>
<keyword id="KW-1185">Reference proteome</keyword>
<dbReference type="EMBL" id="AF222894">
    <property type="protein sequence ID" value="AAF30495.1"/>
    <property type="molecule type" value="Genomic_DNA"/>
</dbReference>
<dbReference type="PDB" id="8IWA">
    <property type="method" value="X-ray"/>
    <property type="resolution" value="2.51 A"/>
    <property type="chains" value="A/B/C/D/E/F/G/H=1-89"/>
</dbReference>
<dbReference type="PDB" id="8IWB">
    <property type="method" value="X-ray"/>
    <property type="resolution" value="2.42 A"/>
    <property type="chains" value="A/B/C/D/E/F/G/H=1-89"/>
</dbReference>
<dbReference type="PDB" id="8IWC">
    <property type="method" value="X-ray"/>
    <property type="resolution" value="2.43 A"/>
    <property type="chains" value="A/B/C/D/E/F/G/H=1-89"/>
</dbReference>
<dbReference type="PDB" id="8JRM">
    <property type="method" value="NMR"/>
    <property type="chains" value="A=1-89"/>
</dbReference>
<dbReference type="PDB" id="8W68">
    <property type="method" value="X-ray"/>
    <property type="resolution" value="2.30 A"/>
    <property type="chains" value="A/B/C/D/E/F/G/H=1-89"/>
</dbReference>
<dbReference type="PDBsum" id="8IWA"/>
<dbReference type="PDBsum" id="8IWB"/>
<dbReference type="PDBsum" id="8IWC"/>
<dbReference type="PDBsum" id="8JRM"/>
<dbReference type="PDBsum" id="8W68"/>
<dbReference type="SMR" id="Q9PR55"/>
<dbReference type="STRING" id="273119.UU089.1"/>
<dbReference type="EnsemblBacteria" id="AAF30495">
    <property type="protein sequence ID" value="AAF30495"/>
    <property type="gene ID" value="UU089.1"/>
</dbReference>
<dbReference type="KEGG" id="uur:UU089.1"/>
<dbReference type="eggNOG" id="ENOG5033K6Q">
    <property type="taxonomic scope" value="Bacteria"/>
</dbReference>
<dbReference type="HOGENOM" id="CLU_195926_0_0_14"/>
<dbReference type="Proteomes" id="UP000000423">
    <property type="component" value="Chromosome"/>
</dbReference>
<protein>
    <recommendedName>
        <fullName>Uncharacterized protein UU089.1</fullName>
    </recommendedName>
</protein>
<evidence type="ECO:0000305" key="1"/>
<gene>
    <name type="ordered locus">UU089.1</name>
</gene>
<feature type="chain" id="PRO_0000220797" description="Uncharacterized protein UU089.1">
    <location>
        <begin position="1"/>
        <end position="89"/>
    </location>
</feature>
<organism>
    <name type="scientific">Ureaplasma parvum serovar 3 (strain ATCC 700970)</name>
    <dbReference type="NCBI Taxonomy" id="273119"/>
    <lineage>
        <taxon>Bacteria</taxon>
        <taxon>Bacillati</taxon>
        <taxon>Mycoplasmatota</taxon>
        <taxon>Mycoplasmoidales</taxon>
        <taxon>Mycoplasmoidaceae</taxon>
        <taxon>Ureaplasma</taxon>
    </lineage>
</organism>
<accession>Q9PR55</accession>